<sequence>MKFLSIISLAVSLVAAAPVEVGLDTGVANLEARQSSTRNELESGSSSNCPKVIYIFARASTEPGNMGISAGPIVADALESRYGASQVWVQGVGGPYSADLASNFIIPEGTSRVAINEAKRLFTLANTKCPNSAVVAGGYSQGTAVMASSISELSSTIQNQIKGVVLSAITKNLQNLGRIPNFSTSKTEVYCALADAVCYGTLFILPAHFLYQADAATSAPRFLAARIG</sequence>
<organism>
    <name type="scientific">Colletotrichum truncatum</name>
    <name type="common">Anthracnose fungus</name>
    <name type="synonym">Colletotrichum capsici</name>
    <dbReference type="NCBI Taxonomy" id="5467"/>
    <lineage>
        <taxon>Eukaryota</taxon>
        <taxon>Fungi</taxon>
        <taxon>Dikarya</taxon>
        <taxon>Ascomycota</taxon>
        <taxon>Pezizomycotina</taxon>
        <taxon>Sordariomycetes</taxon>
        <taxon>Hypocreomycetidae</taxon>
        <taxon>Glomerellales</taxon>
        <taxon>Glomerellaceae</taxon>
        <taxon>Colletotrichum</taxon>
        <taxon>Colletotrichum truncatum species complex</taxon>
    </lineage>
</organism>
<proteinExistence type="evidence at protein level"/>
<reference key="1">
    <citation type="journal article" date="1987" name="Biochemistry">
        <title>Structure of cutinase gene, cDNA, and the derived amino acid sequence from phytopathogenic fungi.</title>
        <authorList>
            <person name="Ettinger W.F."/>
            <person name="Thukral S.K."/>
            <person name="Kolattukudy P.E."/>
        </authorList>
    </citation>
    <scope>NUCLEOTIDE SEQUENCE [GENOMIC DNA]</scope>
    <scope>PARTIAL PROTEIN SEQUENCE</scope>
    <source>
        <strain>ATCC 48574</strain>
    </source>
</reference>
<reference key="2">
    <citation type="journal article" date="2021" name="PLoS ONE">
        <title>Molecular dynamics investigation of the interaction between Colletotrichum capsici cutinase and berberine suggested a mechanism for reduced enzyme activity.</title>
        <authorList>
            <person name="Li Y."/>
            <person name="Wei J."/>
            <person name="Yang H."/>
            <person name="Dai J."/>
            <person name="Ge X."/>
        </authorList>
    </citation>
    <scope>FUNCTION</scope>
    <scope>CATALYTIC ACTIVITY</scope>
    <scope>ACTIVITY REGULATION</scope>
</reference>
<comment type="function">
    <text evidence="1 4">Catalyzes the hydrolysis of complex carboxylic polyesters found in the cell wall of plants (PubMed:33606796). Degrades cutin, a macromolecule that forms the structure of the plant cuticle (PubMed:33606796). Allows pathogenic fungi to penetrate through the cuticular barrier into the host plant during the initial stage of fungal infection (By similarity).</text>
</comment>
<comment type="catalytic activity">
    <reaction evidence="6">
        <text>cutin + H2O = cutin monomers.</text>
        <dbReference type="EC" id="3.1.1.74"/>
    </reaction>
</comment>
<comment type="activity regulation">
    <text evidence="4">Partially inhibited by berberine; higher inhibitory effects are observed with longer chain polyester substrates.</text>
</comment>
<comment type="subcellular location">
    <subcellularLocation>
        <location evidence="2">Secreted</location>
    </subcellularLocation>
</comment>
<comment type="PTM">
    <text evidence="7">The 2 disulfide bonds play a critical role in holding the catalytic residues in juxta-position; reduction of the disulfide bridges results in the complete inactivation of the enzyme.</text>
</comment>
<comment type="similarity">
    <text evidence="5">Belongs to the cutinase family.</text>
</comment>
<accession>P10951</accession>
<dbReference type="EC" id="3.1.1.74" evidence="6"/>
<dbReference type="EMBL" id="M18033">
    <property type="protein sequence ID" value="AAA33043.1"/>
    <property type="molecule type" value="Genomic_DNA"/>
</dbReference>
<dbReference type="PIR" id="A27451">
    <property type="entry name" value="A27451"/>
</dbReference>
<dbReference type="SMR" id="P10951"/>
<dbReference type="ESTHER" id="colca-cutas">
    <property type="family name" value="Cutinase"/>
</dbReference>
<dbReference type="GO" id="GO:0005576">
    <property type="term" value="C:extracellular region"/>
    <property type="evidence" value="ECO:0007669"/>
    <property type="project" value="UniProtKB-SubCell"/>
</dbReference>
<dbReference type="GO" id="GO:0050525">
    <property type="term" value="F:cutinase activity"/>
    <property type="evidence" value="ECO:0000314"/>
    <property type="project" value="UniProtKB"/>
</dbReference>
<dbReference type="GO" id="GO:0016052">
    <property type="term" value="P:carbohydrate catabolic process"/>
    <property type="evidence" value="ECO:0007669"/>
    <property type="project" value="TreeGrafter"/>
</dbReference>
<dbReference type="FunFam" id="3.40.50.1820:FF:000235">
    <property type="entry name" value="Cutinase 1"/>
    <property type="match status" value="1"/>
</dbReference>
<dbReference type="Gene3D" id="3.40.50.1820">
    <property type="entry name" value="alpha/beta hydrolase"/>
    <property type="match status" value="1"/>
</dbReference>
<dbReference type="InterPro" id="IPR029058">
    <property type="entry name" value="AB_hydrolase_fold"/>
</dbReference>
<dbReference type="InterPro" id="IPR000675">
    <property type="entry name" value="Cutinase/axe"/>
</dbReference>
<dbReference type="InterPro" id="IPR043580">
    <property type="entry name" value="CUTINASE_1"/>
</dbReference>
<dbReference type="InterPro" id="IPR043579">
    <property type="entry name" value="CUTINASE_2"/>
</dbReference>
<dbReference type="InterPro" id="IPR011150">
    <property type="entry name" value="Cutinase_monf"/>
</dbReference>
<dbReference type="PANTHER" id="PTHR48250:SF3">
    <property type="entry name" value="CUTINASE 1-RELATED"/>
    <property type="match status" value="1"/>
</dbReference>
<dbReference type="PANTHER" id="PTHR48250">
    <property type="entry name" value="CUTINASE 2-RELATED"/>
    <property type="match status" value="1"/>
</dbReference>
<dbReference type="Pfam" id="PF01083">
    <property type="entry name" value="Cutinase"/>
    <property type="match status" value="1"/>
</dbReference>
<dbReference type="PRINTS" id="PR00129">
    <property type="entry name" value="CUTINASE"/>
</dbReference>
<dbReference type="SMART" id="SM01110">
    <property type="entry name" value="Cutinase"/>
    <property type="match status" value="1"/>
</dbReference>
<dbReference type="SUPFAM" id="SSF53474">
    <property type="entry name" value="alpha/beta-Hydrolases"/>
    <property type="match status" value="1"/>
</dbReference>
<dbReference type="PROSITE" id="PS00155">
    <property type="entry name" value="CUTINASE_1"/>
    <property type="match status" value="1"/>
</dbReference>
<dbReference type="PROSITE" id="PS00931">
    <property type="entry name" value="CUTINASE_2"/>
    <property type="match status" value="1"/>
</dbReference>
<gene>
    <name type="primary">CUTA</name>
</gene>
<feature type="signal peptide" evidence="3">
    <location>
        <begin position="1"/>
        <end position="16"/>
    </location>
</feature>
<feature type="chain" id="PRO_0000006436" description="Cutinase">
    <location>
        <begin position="17"/>
        <end position="228"/>
    </location>
</feature>
<feature type="active site" description="Nucleophile" evidence="1">
    <location>
        <position position="140"/>
    </location>
</feature>
<feature type="active site" evidence="1">
    <location>
        <position position="195"/>
    </location>
</feature>
<feature type="active site" description="Proton donor/acceptor" evidence="1">
    <location>
        <position position="208"/>
    </location>
</feature>
<feature type="site" description="Transition state stabilizer" evidence="1">
    <location>
        <position position="60"/>
    </location>
</feature>
<feature type="site" description="Transition state stabilizer" evidence="1">
    <location>
        <position position="141"/>
    </location>
</feature>
<feature type="disulfide bond" evidence="1">
    <location>
        <begin position="49"/>
        <end position="129"/>
    </location>
</feature>
<feature type="disulfide bond" evidence="1">
    <location>
        <begin position="191"/>
        <end position="198"/>
    </location>
</feature>
<keyword id="KW-0903">Direct protein sequencing</keyword>
<keyword id="KW-1015">Disulfide bond</keyword>
<keyword id="KW-0378">Hydrolase</keyword>
<keyword id="KW-0964">Secreted</keyword>
<keyword id="KW-0719">Serine esterase</keyword>
<keyword id="KW-0732">Signal</keyword>
<keyword id="KW-0843">Virulence</keyword>
<protein>
    <recommendedName>
        <fullName>Cutinase</fullName>
        <ecNumber evidence="6">3.1.1.74</ecNumber>
    </recommendedName>
    <alternativeName>
        <fullName>Cutin hydrolase</fullName>
    </alternativeName>
</protein>
<name>CUTI_COLTU</name>
<evidence type="ECO:0000250" key="1">
    <source>
        <dbReference type="UniProtKB" id="P00590"/>
    </source>
</evidence>
<evidence type="ECO:0000250" key="2">
    <source>
        <dbReference type="UniProtKB" id="P11373"/>
    </source>
</evidence>
<evidence type="ECO:0000255" key="3"/>
<evidence type="ECO:0000269" key="4">
    <source>
    </source>
</evidence>
<evidence type="ECO:0000305" key="5"/>
<evidence type="ECO:0000305" key="6">
    <source>
    </source>
</evidence>
<evidence type="ECO:0000305" key="7">
    <source ref="1"/>
</evidence>